<proteinExistence type="inferred from homology"/>
<reference key="1">
    <citation type="journal article" date="2004" name="Nucleic Acids Res.">
        <title>Comparative analysis of the Borrelia garinii genome.</title>
        <authorList>
            <person name="Gloeckner G."/>
            <person name="Lehmann R."/>
            <person name="Romualdi A."/>
            <person name="Pradella S."/>
            <person name="Schulte-Spechtel U."/>
            <person name="Schilhabel M."/>
            <person name="Wilske B."/>
            <person name="Suehnel J."/>
            <person name="Platzer M."/>
        </authorList>
    </citation>
    <scope>NUCLEOTIDE SEQUENCE [LARGE SCALE GENOMIC DNA]</scope>
    <source>
        <strain>ATCC BAA-2496 / DSM 23469 / PBi</strain>
    </source>
</reference>
<gene>
    <name evidence="1" type="primary">rny</name>
    <name type="ordered locus">BG0516</name>
</gene>
<dbReference type="EC" id="3.1.-.-" evidence="1"/>
<dbReference type="EMBL" id="CP000013">
    <property type="protein sequence ID" value="AAU07355.1"/>
    <property type="molecule type" value="Genomic_DNA"/>
</dbReference>
<dbReference type="RefSeq" id="WP_011193817.1">
    <property type="nucleotide sequence ID" value="NZ_CP028872.1"/>
</dbReference>
<dbReference type="SMR" id="Q661B6"/>
<dbReference type="GeneID" id="45161298"/>
<dbReference type="KEGG" id="bga:BG0516"/>
<dbReference type="eggNOG" id="COG1418">
    <property type="taxonomic scope" value="Bacteria"/>
</dbReference>
<dbReference type="HOGENOM" id="CLU_028328_1_0_12"/>
<dbReference type="OrthoDB" id="9803205at2"/>
<dbReference type="Proteomes" id="UP000002276">
    <property type="component" value="Chromosome"/>
</dbReference>
<dbReference type="GO" id="GO:0005886">
    <property type="term" value="C:plasma membrane"/>
    <property type="evidence" value="ECO:0007669"/>
    <property type="project" value="UniProtKB-SubCell"/>
</dbReference>
<dbReference type="GO" id="GO:0003723">
    <property type="term" value="F:RNA binding"/>
    <property type="evidence" value="ECO:0007669"/>
    <property type="project" value="UniProtKB-UniRule"/>
</dbReference>
<dbReference type="GO" id="GO:0004521">
    <property type="term" value="F:RNA endonuclease activity"/>
    <property type="evidence" value="ECO:0007669"/>
    <property type="project" value="UniProtKB-UniRule"/>
</dbReference>
<dbReference type="GO" id="GO:0006402">
    <property type="term" value="P:mRNA catabolic process"/>
    <property type="evidence" value="ECO:0007669"/>
    <property type="project" value="UniProtKB-UniRule"/>
</dbReference>
<dbReference type="CDD" id="cd00077">
    <property type="entry name" value="HDc"/>
    <property type="match status" value="1"/>
</dbReference>
<dbReference type="CDD" id="cd22431">
    <property type="entry name" value="KH-I_RNaseY"/>
    <property type="match status" value="1"/>
</dbReference>
<dbReference type="Gene3D" id="3.30.310.210">
    <property type="match status" value="1"/>
</dbReference>
<dbReference type="Gene3D" id="1.10.3210.10">
    <property type="entry name" value="Hypothetical protein af1432"/>
    <property type="match status" value="1"/>
</dbReference>
<dbReference type="HAMAP" id="MF_00335">
    <property type="entry name" value="RNase_Y"/>
    <property type="match status" value="1"/>
</dbReference>
<dbReference type="InterPro" id="IPR003607">
    <property type="entry name" value="HD/PDEase_dom"/>
</dbReference>
<dbReference type="InterPro" id="IPR006674">
    <property type="entry name" value="HD_domain"/>
</dbReference>
<dbReference type="InterPro" id="IPR006675">
    <property type="entry name" value="HDIG_dom"/>
</dbReference>
<dbReference type="InterPro" id="IPR004087">
    <property type="entry name" value="KH_dom"/>
</dbReference>
<dbReference type="InterPro" id="IPR004088">
    <property type="entry name" value="KH_dom_type_1"/>
</dbReference>
<dbReference type="InterPro" id="IPR036612">
    <property type="entry name" value="KH_dom_type_1_sf"/>
</dbReference>
<dbReference type="InterPro" id="IPR017705">
    <property type="entry name" value="Ribonuclease_Y"/>
</dbReference>
<dbReference type="InterPro" id="IPR022711">
    <property type="entry name" value="RNase_Y_N"/>
</dbReference>
<dbReference type="NCBIfam" id="TIGR00277">
    <property type="entry name" value="HDIG"/>
    <property type="match status" value="1"/>
</dbReference>
<dbReference type="NCBIfam" id="TIGR03319">
    <property type="entry name" value="RNase_Y"/>
    <property type="match status" value="1"/>
</dbReference>
<dbReference type="PANTHER" id="PTHR12826">
    <property type="entry name" value="RIBONUCLEASE Y"/>
    <property type="match status" value="1"/>
</dbReference>
<dbReference type="PANTHER" id="PTHR12826:SF15">
    <property type="entry name" value="RIBONUCLEASE Y"/>
    <property type="match status" value="1"/>
</dbReference>
<dbReference type="Pfam" id="PF01966">
    <property type="entry name" value="HD"/>
    <property type="match status" value="1"/>
</dbReference>
<dbReference type="Pfam" id="PF00013">
    <property type="entry name" value="KH_1"/>
    <property type="match status" value="1"/>
</dbReference>
<dbReference type="Pfam" id="PF12072">
    <property type="entry name" value="RNase_Y_N"/>
    <property type="match status" value="1"/>
</dbReference>
<dbReference type="SMART" id="SM00471">
    <property type="entry name" value="HDc"/>
    <property type="match status" value="1"/>
</dbReference>
<dbReference type="SMART" id="SM00322">
    <property type="entry name" value="KH"/>
    <property type="match status" value="1"/>
</dbReference>
<dbReference type="SUPFAM" id="SSF54791">
    <property type="entry name" value="Eukaryotic type KH-domain (KH-domain type I)"/>
    <property type="match status" value="1"/>
</dbReference>
<dbReference type="SUPFAM" id="SSF109604">
    <property type="entry name" value="HD-domain/PDEase-like"/>
    <property type="match status" value="1"/>
</dbReference>
<dbReference type="PROSITE" id="PS51831">
    <property type="entry name" value="HD"/>
    <property type="match status" value="1"/>
</dbReference>
<dbReference type="PROSITE" id="PS50084">
    <property type="entry name" value="KH_TYPE_1"/>
    <property type="match status" value="1"/>
</dbReference>
<feature type="chain" id="PRO_0000344830" description="Ribonuclease Y">
    <location>
        <begin position="1"/>
        <end position="510"/>
    </location>
</feature>
<feature type="transmembrane region" description="Helical" evidence="1">
    <location>
        <begin position="2"/>
        <end position="22"/>
    </location>
</feature>
<feature type="domain" description="KH" evidence="1">
    <location>
        <begin position="198"/>
        <end position="258"/>
    </location>
</feature>
<feature type="domain" description="HD" evidence="2">
    <location>
        <begin position="324"/>
        <end position="419"/>
    </location>
</feature>
<keyword id="KW-1003">Cell membrane</keyword>
<keyword id="KW-0255">Endonuclease</keyword>
<keyword id="KW-0378">Hydrolase</keyword>
<keyword id="KW-0472">Membrane</keyword>
<keyword id="KW-0540">Nuclease</keyword>
<keyword id="KW-0694">RNA-binding</keyword>
<keyword id="KW-0812">Transmembrane</keyword>
<keyword id="KW-1133">Transmembrane helix</keyword>
<name>RNY_BORGP</name>
<evidence type="ECO:0000255" key="1">
    <source>
        <dbReference type="HAMAP-Rule" id="MF_00335"/>
    </source>
</evidence>
<evidence type="ECO:0000255" key="2">
    <source>
        <dbReference type="PROSITE-ProRule" id="PRU01175"/>
    </source>
</evidence>
<accession>Q661B6</accession>
<comment type="function">
    <text evidence="1">Endoribonuclease that initiates mRNA decay.</text>
</comment>
<comment type="subcellular location">
    <subcellularLocation>
        <location evidence="1">Cell membrane</location>
        <topology evidence="1">Single-pass membrane protein</topology>
    </subcellularLocation>
</comment>
<comment type="similarity">
    <text evidence="1">Belongs to the RNase Y family.</text>
</comment>
<organism>
    <name type="scientific">Borrelia garinii subsp. bavariensis (strain ATCC BAA-2496 / DSM 23469 / PBi)</name>
    <name type="common">Borreliella bavariensis</name>
    <dbReference type="NCBI Taxonomy" id="290434"/>
    <lineage>
        <taxon>Bacteria</taxon>
        <taxon>Pseudomonadati</taxon>
        <taxon>Spirochaetota</taxon>
        <taxon>Spirochaetia</taxon>
        <taxon>Spirochaetales</taxon>
        <taxon>Borreliaceae</taxon>
        <taxon>Borreliella</taxon>
    </lineage>
</organism>
<sequence length="510" mass="57990">MIYIIFSSIFAGFILGFLVRVFLGRLSLLDLEKNLTKVRVESQLEIENERKQIIANAKSQMLKEKNQQDRDIRDRKNEIVNLEKRLLQREETLDKRISALDKQQSRVDFKIKEFEQKEKAIREKEADLVKRLENISGLTREDARKIVIEKVEHESRRDAQVIINKSEQEAQLLADKVAKDILVSTMQRIVTEVSSEFTVASVELPNDEMKGRIIGKEGRNIRALETLIGADIIIDDTPEAVVISCFDPIRKELAKRTLERLVTDGRIHPARIEEVVYNVTNEINSIIQEEGEKVVFDLNIHGLDKRLIRGLGRLYFRSSYGQNVLSHSKETAIIGEILAKEMKLDPIVVKRACLLHDIGKGMESISENSEGHAITGAELAQSCGESEIVVNAIAAHHNEVKPESLEAIVVQIADAISASRPGARRESLNNYINRLKRLEDIAYSFEGVQKCYAIQAGREVRIIVDNVLVNDEKSILLARDIAKKIEAEMRYPGKIKVTIIRETRVIEYAR</sequence>
<protein>
    <recommendedName>
        <fullName evidence="1">Ribonuclease Y</fullName>
        <shortName evidence="1">RNase Y</shortName>
        <ecNumber evidence="1">3.1.-.-</ecNumber>
    </recommendedName>
</protein>